<organism>
    <name type="scientific">Arabidopsis thaliana</name>
    <name type="common">Mouse-ear cress</name>
    <dbReference type="NCBI Taxonomy" id="3702"/>
    <lineage>
        <taxon>Eukaryota</taxon>
        <taxon>Viridiplantae</taxon>
        <taxon>Streptophyta</taxon>
        <taxon>Embryophyta</taxon>
        <taxon>Tracheophyta</taxon>
        <taxon>Spermatophyta</taxon>
        <taxon>Magnoliopsida</taxon>
        <taxon>eudicotyledons</taxon>
        <taxon>Gunneridae</taxon>
        <taxon>Pentapetalae</taxon>
        <taxon>rosids</taxon>
        <taxon>malvids</taxon>
        <taxon>Brassicales</taxon>
        <taxon>Brassicaceae</taxon>
        <taxon>Camelineae</taxon>
        <taxon>Arabidopsis</taxon>
    </lineage>
</organism>
<reference key="1">
    <citation type="journal article" date="2000" name="DNA Res.">
        <title>Structural analysis of Arabidopsis thaliana chromosome 5. X. Sequence features of the regions of 3,076,755 bp covered by sixty P1 and TAC clones.</title>
        <authorList>
            <person name="Sato S."/>
            <person name="Nakamura Y."/>
            <person name="Kaneko T."/>
            <person name="Katoh T."/>
            <person name="Asamizu E."/>
            <person name="Kotani H."/>
            <person name="Tabata S."/>
        </authorList>
    </citation>
    <scope>NUCLEOTIDE SEQUENCE [LARGE SCALE GENOMIC DNA]</scope>
    <source>
        <strain>cv. Columbia</strain>
    </source>
</reference>
<reference key="2">
    <citation type="journal article" date="2017" name="Plant J.">
        <title>Araport11: a complete reannotation of the Arabidopsis thaliana reference genome.</title>
        <authorList>
            <person name="Cheng C.Y."/>
            <person name="Krishnakumar V."/>
            <person name="Chan A.P."/>
            <person name="Thibaud-Nissen F."/>
            <person name="Schobel S."/>
            <person name="Town C.D."/>
        </authorList>
    </citation>
    <scope>GENOME REANNOTATION</scope>
    <source>
        <strain>cv. Columbia</strain>
    </source>
</reference>
<reference key="3">
    <citation type="journal article" date="2003" name="Science">
        <title>Empirical analysis of transcriptional activity in the Arabidopsis genome.</title>
        <authorList>
            <person name="Yamada K."/>
            <person name="Lim J."/>
            <person name="Dale J.M."/>
            <person name="Chen H."/>
            <person name="Shinn P."/>
            <person name="Palm C.J."/>
            <person name="Southwick A.M."/>
            <person name="Wu H.C."/>
            <person name="Kim C.J."/>
            <person name="Nguyen M."/>
            <person name="Pham P.K."/>
            <person name="Cheuk R.F."/>
            <person name="Karlin-Newmann G."/>
            <person name="Liu S.X."/>
            <person name="Lam B."/>
            <person name="Sakano H."/>
            <person name="Wu T."/>
            <person name="Yu G."/>
            <person name="Miranda M."/>
            <person name="Quach H.L."/>
            <person name="Tripp M."/>
            <person name="Chang C.H."/>
            <person name="Lee J.M."/>
            <person name="Toriumi M.J."/>
            <person name="Chan M.M."/>
            <person name="Tang C.C."/>
            <person name="Onodera C.S."/>
            <person name="Deng J.M."/>
            <person name="Akiyama K."/>
            <person name="Ansari Y."/>
            <person name="Arakawa T."/>
            <person name="Banh J."/>
            <person name="Banno F."/>
            <person name="Bowser L."/>
            <person name="Brooks S.Y."/>
            <person name="Carninci P."/>
            <person name="Chao Q."/>
            <person name="Choy N."/>
            <person name="Enju A."/>
            <person name="Goldsmith A.D."/>
            <person name="Gurjal M."/>
            <person name="Hansen N.F."/>
            <person name="Hayashizaki Y."/>
            <person name="Johnson-Hopson C."/>
            <person name="Hsuan V.W."/>
            <person name="Iida K."/>
            <person name="Karnes M."/>
            <person name="Khan S."/>
            <person name="Koesema E."/>
            <person name="Ishida J."/>
            <person name="Jiang P.X."/>
            <person name="Jones T."/>
            <person name="Kawai J."/>
            <person name="Kamiya A."/>
            <person name="Meyers C."/>
            <person name="Nakajima M."/>
            <person name="Narusaka M."/>
            <person name="Seki M."/>
            <person name="Sakurai T."/>
            <person name="Satou M."/>
            <person name="Tamse R."/>
            <person name="Vaysberg M."/>
            <person name="Wallender E.K."/>
            <person name="Wong C."/>
            <person name="Yamamura Y."/>
            <person name="Yuan S."/>
            <person name="Shinozaki K."/>
            <person name="Davis R.W."/>
            <person name="Theologis A."/>
            <person name="Ecker J.R."/>
        </authorList>
    </citation>
    <scope>NUCLEOTIDE SEQUENCE [LARGE SCALE MRNA]</scope>
    <source>
        <strain>cv. Columbia</strain>
    </source>
</reference>
<reference key="4">
    <citation type="submission" date="2006-07" db="EMBL/GenBank/DDBJ databases">
        <title>Large-scale analysis of RIKEN Arabidopsis full-length (RAFL) cDNAs.</title>
        <authorList>
            <person name="Totoki Y."/>
            <person name="Seki M."/>
            <person name="Ishida J."/>
            <person name="Nakajima M."/>
            <person name="Enju A."/>
            <person name="Kamiya A."/>
            <person name="Narusaka M."/>
            <person name="Shin-i T."/>
            <person name="Nakagawa M."/>
            <person name="Sakamoto N."/>
            <person name="Oishi K."/>
            <person name="Kohara Y."/>
            <person name="Kobayashi M."/>
            <person name="Toyoda A."/>
            <person name="Sakaki Y."/>
            <person name="Sakurai T."/>
            <person name="Iida K."/>
            <person name="Akiyama K."/>
            <person name="Satou M."/>
            <person name="Toyoda T."/>
            <person name="Konagaya A."/>
            <person name="Carninci P."/>
            <person name="Kawai J."/>
            <person name="Hayashizaki Y."/>
            <person name="Shinozaki K."/>
        </authorList>
    </citation>
    <scope>NUCLEOTIDE SEQUENCE [LARGE SCALE MRNA]</scope>
    <source>
        <strain>cv. Columbia</strain>
    </source>
</reference>
<reference key="5">
    <citation type="journal article" date="2004" name="Proc. Natl. Acad. Sci. U.S.A.">
        <title>FRIGIDA-related genes are required for the winter-annual habit in Arabidopsis.</title>
        <authorList>
            <person name="Michaels S.D."/>
            <person name="Bezerra I.C."/>
            <person name="Amasino R.M."/>
        </authorList>
    </citation>
    <scope>GENE FAMILY</scope>
</reference>
<reference key="6">
    <citation type="journal article" date="2010" name="Plant Mol. Biol.">
        <title>FRIGIDA and related proteins have a conserved central domain and family specific N- and C- terminal regions that are functionally important.</title>
        <authorList>
            <person name="Risk J.M."/>
            <person name="Laurie R.E."/>
            <person name="Macknight R.C."/>
            <person name="Day C.L."/>
        </authorList>
    </citation>
    <scope>GENE FAMILY</scope>
    <scope>NOMENCLATURE</scope>
</reference>
<sequence>MEDTRSVASLMDSTSSKIQQLQKAFAELESQRAVTLNLKWKELEEHFHGLERSLKRRFHELEDQEKEYETKTRKAQELLEKKKAAVEAKEKAALERLQKKRDAAMFTINSALDKYNNAPVSKPSVGERWPQNAVEDSSNVFAADSITDDNPDGIVQDVQISPVMGNYEVKAYPQLLKLCGDMDSTGLHKFVSDNRKNLASLKEEIPMAFRAAANPASLVLDSLEGFYPMEAPTADGKKDANLLGMRRTCIMLMECLSILLSGLDRNCLAVVLSQNVKHRAKTIAEGWNPLLESLDMDACNGNSLEAHAFLQLLATFAIVADFKEDELLKLIPMVSRRRQAAELCRSLGLAEKMPGVIEVLVNSGKQIDAVNLAFAFELTEQFSPVSLLKSYLIEARRSSPQGRPGNASPAVQDEFNERELIGLKTVIKCIEEHSLEEQYPVEPLHKRILQLEKAKADKKRATEPMKPQPKRPRGAQPRVTDNNNNINNNKTGYGRVIPERYPQYVYDNRPFLSGPIMAAQPPPPPPPQTYTFNPAPAHGNFYANCYQYQAPPPPPYFH</sequence>
<evidence type="ECO:0000255" key="1"/>
<evidence type="ECO:0000256" key="2">
    <source>
        <dbReference type="SAM" id="MobiDB-lite"/>
    </source>
</evidence>
<evidence type="ECO:0000305" key="3"/>
<proteinExistence type="evidence at protein level"/>
<comment type="interaction">
    <interactant intactId="EBI-4440511">
        <id>Q67ZB3</id>
    </interactant>
    <interactant intactId="EBI-4442126">
        <id>Q940H8</id>
        <label>FRL4B</label>
    </interactant>
    <organismsDiffer>false</organismsDiffer>
    <experiments>3</experiments>
</comment>
<comment type="similarity">
    <text evidence="3">Belongs to the Frigida family.</text>
</comment>
<comment type="sequence caution" evidence="3">
    <conflict type="erroneous gene model prediction">
        <sequence resource="EMBL-CDS" id="BAA96959"/>
    </conflict>
    <text>The predicted gene At5g48390 has been split into 2 genes: At5g48385 and At5g48390.</text>
</comment>
<gene>
    <name type="primary">FRL3</name>
    <name type="ordered locus">At5g48385</name>
    <name type="ORF">MJE7.2</name>
</gene>
<protein>
    <recommendedName>
        <fullName>FRIGIDA-like protein 3</fullName>
    </recommendedName>
</protein>
<dbReference type="EMBL" id="AB020745">
    <property type="protein sequence ID" value="BAA96959.1"/>
    <property type="status" value="ALT_SEQ"/>
    <property type="molecule type" value="Genomic_DNA"/>
</dbReference>
<dbReference type="EMBL" id="CP002688">
    <property type="protein sequence ID" value="AED95663.1"/>
    <property type="molecule type" value="Genomic_DNA"/>
</dbReference>
<dbReference type="EMBL" id="AY136326">
    <property type="protein sequence ID" value="AAM96992.1"/>
    <property type="molecule type" value="mRNA"/>
</dbReference>
<dbReference type="EMBL" id="BT000104">
    <property type="protein sequence ID" value="AAN15423.1"/>
    <property type="molecule type" value="mRNA"/>
</dbReference>
<dbReference type="EMBL" id="AK176205">
    <property type="protein sequence ID" value="BAD43968.1"/>
    <property type="molecule type" value="mRNA"/>
</dbReference>
<dbReference type="EMBL" id="AK226356">
    <property type="protein sequence ID" value="BAE98504.1"/>
    <property type="molecule type" value="mRNA"/>
</dbReference>
<dbReference type="EMBL" id="AK230331">
    <property type="protein sequence ID" value="BAF02130.1"/>
    <property type="molecule type" value="mRNA"/>
</dbReference>
<dbReference type="RefSeq" id="NP_850923.1">
    <property type="nucleotide sequence ID" value="NM_180592.3"/>
</dbReference>
<dbReference type="SMR" id="Q67ZB3"/>
<dbReference type="BioGRID" id="20139">
    <property type="interactions" value="9"/>
</dbReference>
<dbReference type="FunCoup" id="Q67ZB3">
    <property type="interactions" value="2406"/>
</dbReference>
<dbReference type="IntAct" id="Q67ZB3">
    <property type="interactions" value="9"/>
</dbReference>
<dbReference type="STRING" id="3702.Q67ZB3"/>
<dbReference type="iPTMnet" id="Q67ZB3"/>
<dbReference type="PaxDb" id="3702-AT5G48385.1"/>
<dbReference type="ProteomicsDB" id="228950"/>
<dbReference type="EnsemblPlants" id="AT5G48385.1">
    <property type="protein sequence ID" value="AT5G48385.1"/>
    <property type="gene ID" value="AT5G48385"/>
</dbReference>
<dbReference type="GeneID" id="834893"/>
<dbReference type="Gramene" id="AT5G48385.1">
    <property type="protein sequence ID" value="AT5G48385.1"/>
    <property type="gene ID" value="AT5G48385"/>
</dbReference>
<dbReference type="KEGG" id="ath:AT5G48385"/>
<dbReference type="Araport" id="AT5G48385"/>
<dbReference type="TAIR" id="AT5G48385"/>
<dbReference type="eggNOG" id="ENOG502RRHA">
    <property type="taxonomic scope" value="Eukaryota"/>
</dbReference>
<dbReference type="HOGENOM" id="CLU_026883_2_1_1"/>
<dbReference type="InParanoid" id="Q67ZB3"/>
<dbReference type="OMA" id="FYASRMT"/>
<dbReference type="PhylomeDB" id="Q67ZB3"/>
<dbReference type="PRO" id="PR:Q67ZB3"/>
<dbReference type="Proteomes" id="UP000006548">
    <property type="component" value="Chromosome 5"/>
</dbReference>
<dbReference type="ExpressionAtlas" id="Q67ZB3">
    <property type="expression patterns" value="baseline and differential"/>
</dbReference>
<dbReference type="GO" id="GO:0009536">
    <property type="term" value="C:plastid"/>
    <property type="evidence" value="ECO:0007005"/>
    <property type="project" value="TAIR"/>
</dbReference>
<dbReference type="GO" id="GO:0030154">
    <property type="term" value="P:cell differentiation"/>
    <property type="evidence" value="ECO:0007669"/>
    <property type="project" value="UniProtKB-KW"/>
</dbReference>
<dbReference type="GO" id="GO:0009908">
    <property type="term" value="P:flower development"/>
    <property type="evidence" value="ECO:0007669"/>
    <property type="project" value="UniProtKB-KW"/>
</dbReference>
<dbReference type="InterPro" id="IPR012474">
    <property type="entry name" value="Frigida"/>
</dbReference>
<dbReference type="PANTHER" id="PTHR31791:SF4">
    <property type="entry name" value="FRIGIDA-LIKE PROTEIN 3"/>
    <property type="match status" value="1"/>
</dbReference>
<dbReference type="PANTHER" id="PTHR31791">
    <property type="entry name" value="FRIGIDA-LIKE PROTEIN 3-RELATED"/>
    <property type="match status" value="1"/>
</dbReference>
<dbReference type="Pfam" id="PF07899">
    <property type="entry name" value="Frigida"/>
    <property type="match status" value="1"/>
</dbReference>
<keyword id="KW-0175">Coiled coil</keyword>
<keyword id="KW-0217">Developmental protein</keyword>
<keyword id="KW-0221">Differentiation</keyword>
<keyword id="KW-0287">Flowering</keyword>
<keyword id="KW-1185">Reference proteome</keyword>
<feature type="chain" id="PRO_0000423742" description="FRIGIDA-like protein 3">
    <location>
        <begin position="1"/>
        <end position="558"/>
    </location>
</feature>
<feature type="region of interest" description="Disordered" evidence="2">
    <location>
        <begin position="454"/>
        <end position="494"/>
    </location>
</feature>
<feature type="coiled-coil region" evidence="1">
    <location>
        <begin position="9"/>
        <end position="102"/>
    </location>
</feature>
<feature type="compositionally biased region" description="Basic and acidic residues" evidence="2">
    <location>
        <begin position="454"/>
        <end position="463"/>
    </location>
</feature>
<feature type="sequence conflict" description="In Ref. 3; AAM96992/AAN15423." evidence="3" ref="3">
    <original>K</original>
    <variation>E</variation>
    <location>
        <position position="453"/>
    </location>
</feature>
<accession>Q67ZB3</accession>
<accession>Q8L7D6</accession>
<accession>Q9LV73</accession>
<name>FRL3_ARATH</name>